<reference evidence="5 6" key="1">
    <citation type="journal article" date="2000" name="J. Neurosci.">
        <title>Mutants of a temperature-sensitive two-P domain potassium channel.</title>
        <authorList>
            <person name="Kunkel M.T."/>
            <person name="Johnstone D.B."/>
            <person name="Thomas J.H."/>
            <person name="Salkoff L."/>
        </authorList>
    </citation>
    <scope>NUCLEOTIDE SEQUENCE [MRNA]</scope>
    <scope>FUNCTION</scope>
    <scope>TISSUE SPECIFICITY</scope>
    <scope>MUTAGENESIS OF GLY-140; GLY-165 AND MET-280</scope>
    <scope>DISRUPTION PHENOTYPE</scope>
</reference>
<reference key="2">
    <citation type="journal article" date="1998" name="Science">
        <title>Genome sequence of the nematode C. elegans: a platform for investigating biology.</title>
        <authorList>
            <consortium name="The C. elegans sequencing consortium"/>
        </authorList>
    </citation>
    <scope>NUCLEOTIDE SEQUENCE [LARGE SCALE GENOMIC DNA]</scope>
    <source>
        <strain>Bristol N2</strain>
    </source>
</reference>
<reference key="3">
    <citation type="journal article" date="2007" name="Mol. Cell. Proteomics">
        <title>Proteomics reveals N-linked glycoprotein diversity in Caenorhabditis elegans and suggests an atypical translocation mechanism for integral membrane proteins.</title>
        <authorList>
            <person name="Kaji H."/>
            <person name="Kamiie J."/>
            <person name="Kawakami H."/>
            <person name="Kido K."/>
            <person name="Yamauchi Y."/>
            <person name="Shinkawa T."/>
            <person name="Taoka M."/>
            <person name="Takahashi N."/>
            <person name="Isobe T."/>
        </authorList>
    </citation>
    <scope>GLYCOSYLATION [LARGE SCALE ANALYSIS] AT ASN-88</scope>
    <scope>IDENTIFICATION BY MASS SPECTROMETRY</scope>
    <source>
        <strain>Bristol N2</strain>
    </source>
</reference>
<name>TWK18_CAEEL</name>
<dbReference type="EMBL" id="AF083650">
    <property type="protein sequence ID" value="AAC32861.1"/>
    <property type="molecule type" value="mRNA"/>
</dbReference>
<dbReference type="EMBL" id="FO080639">
    <property type="protein sequence ID" value="CCD65384.1"/>
    <property type="molecule type" value="Genomic_DNA"/>
</dbReference>
<dbReference type="PIR" id="T15585">
    <property type="entry name" value="T15585"/>
</dbReference>
<dbReference type="PIR" id="T43394">
    <property type="entry name" value="T43394"/>
</dbReference>
<dbReference type="RefSeq" id="NP_001379714.1">
    <property type="nucleotide sequence ID" value="NM_001392816.1"/>
</dbReference>
<dbReference type="RefSeq" id="NP_509516.1">
    <property type="nucleotide sequence ID" value="NM_077115.5"/>
</dbReference>
<dbReference type="SMR" id="Q18120"/>
<dbReference type="BioGRID" id="46058">
    <property type="interactions" value="1"/>
</dbReference>
<dbReference type="FunCoup" id="Q18120">
    <property type="interactions" value="11"/>
</dbReference>
<dbReference type="STRING" id="6239.C24A3.6.1"/>
<dbReference type="TCDB" id="1.A.1.9.5">
    <property type="family name" value="the voltage-gated ion channel (vic) superfamily"/>
</dbReference>
<dbReference type="GlyCosmos" id="Q18120">
    <property type="glycosylation" value="1 site, No reported glycans"/>
</dbReference>
<dbReference type="iPTMnet" id="Q18120"/>
<dbReference type="PaxDb" id="6239-C24A3.6.1"/>
<dbReference type="PeptideAtlas" id="Q18120"/>
<dbReference type="EnsemblMetazoa" id="C24A3.6.1">
    <property type="protein sequence ID" value="C24A3.6.1"/>
    <property type="gene ID" value="WBGene00006672"/>
</dbReference>
<dbReference type="EnsemblMetazoa" id="C24A3.6.2">
    <property type="protein sequence ID" value="C24A3.6.2"/>
    <property type="gene ID" value="WBGene00006672"/>
</dbReference>
<dbReference type="GeneID" id="181139"/>
<dbReference type="UCSC" id="C24A3.6.2">
    <property type="organism name" value="c. elegans"/>
</dbReference>
<dbReference type="AGR" id="WB:WBGene00006672"/>
<dbReference type="WormBase" id="C24A3.6">
    <property type="protein sequence ID" value="CE24811"/>
    <property type="gene ID" value="WBGene00006672"/>
    <property type="gene designation" value="twk-18"/>
</dbReference>
<dbReference type="eggNOG" id="KOG1418">
    <property type="taxonomic scope" value="Eukaryota"/>
</dbReference>
<dbReference type="HOGENOM" id="CLU_597598_0_0_1"/>
<dbReference type="InParanoid" id="Q18120"/>
<dbReference type="OMA" id="FYCMTVY"/>
<dbReference type="OrthoDB" id="297496at2759"/>
<dbReference type="PhylomeDB" id="Q18120"/>
<dbReference type="Reactome" id="R-CEL-1299503">
    <property type="pathway name" value="TWIK related potassium channel (TREK)"/>
</dbReference>
<dbReference type="Reactome" id="R-CEL-5576886">
    <property type="pathway name" value="Phase 4 - resting membrane potential"/>
</dbReference>
<dbReference type="PRO" id="PR:Q18120"/>
<dbReference type="Proteomes" id="UP000001940">
    <property type="component" value="Chromosome X"/>
</dbReference>
<dbReference type="Bgee" id="WBGene00006672">
    <property type="expression patterns" value="Expressed in larva and 3 other cell types or tissues"/>
</dbReference>
<dbReference type="GO" id="GO:0016020">
    <property type="term" value="C:membrane"/>
    <property type="evidence" value="ECO:0000305"/>
    <property type="project" value="WormBase"/>
</dbReference>
<dbReference type="GO" id="GO:0005886">
    <property type="term" value="C:plasma membrane"/>
    <property type="evidence" value="ECO:0000318"/>
    <property type="project" value="GO_Central"/>
</dbReference>
<dbReference type="GO" id="GO:0015271">
    <property type="term" value="F:outward rectifier potassium channel activity"/>
    <property type="evidence" value="ECO:0000314"/>
    <property type="project" value="WormBase"/>
</dbReference>
<dbReference type="GO" id="GO:0022841">
    <property type="term" value="F:potassium ion leak channel activity"/>
    <property type="evidence" value="ECO:0000318"/>
    <property type="project" value="GO_Central"/>
</dbReference>
<dbReference type="GO" id="GO:0040011">
    <property type="term" value="P:locomotion"/>
    <property type="evidence" value="ECO:0000315"/>
    <property type="project" value="WormBase"/>
</dbReference>
<dbReference type="GO" id="GO:0006936">
    <property type="term" value="P:muscle contraction"/>
    <property type="evidence" value="ECO:0000315"/>
    <property type="project" value="WormBase"/>
</dbReference>
<dbReference type="GO" id="GO:0071805">
    <property type="term" value="P:potassium ion transmembrane transport"/>
    <property type="evidence" value="ECO:0000318"/>
    <property type="project" value="GO_Central"/>
</dbReference>
<dbReference type="GO" id="GO:0006813">
    <property type="term" value="P:potassium ion transport"/>
    <property type="evidence" value="ECO:0000314"/>
    <property type="project" value="WormBase"/>
</dbReference>
<dbReference type="FunFam" id="1.10.287.70:FF:000289">
    <property type="entry name" value="CRE-TWK-18 protein"/>
    <property type="match status" value="1"/>
</dbReference>
<dbReference type="Gene3D" id="1.10.287.70">
    <property type="match status" value="1"/>
</dbReference>
<dbReference type="InterPro" id="IPR003280">
    <property type="entry name" value="2pore_dom_K_chnl"/>
</dbReference>
<dbReference type="InterPro" id="IPR013099">
    <property type="entry name" value="K_chnl_dom"/>
</dbReference>
<dbReference type="PANTHER" id="PTHR11003">
    <property type="entry name" value="POTASSIUM CHANNEL, SUBFAMILY K"/>
    <property type="match status" value="1"/>
</dbReference>
<dbReference type="PANTHER" id="PTHR11003:SF345">
    <property type="entry name" value="TWIK FAMILY OF POTASSIUM CHANNELS PROTEIN 18"/>
    <property type="match status" value="1"/>
</dbReference>
<dbReference type="Pfam" id="PF07885">
    <property type="entry name" value="Ion_trans_2"/>
    <property type="match status" value="2"/>
</dbReference>
<dbReference type="PRINTS" id="PR01333">
    <property type="entry name" value="2POREKCHANEL"/>
</dbReference>
<dbReference type="SUPFAM" id="SSF81324">
    <property type="entry name" value="Voltage-gated potassium channels"/>
    <property type="match status" value="2"/>
</dbReference>
<gene>
    <name type="primary">twk-18</name>
    <name type="ORF">C24A3.6</name>
</gene>
<proteinExistence type="evidence at protein level"/>
<feature type="chain" id="PRO_0000101773" description="TWiK family of potassium channels protein 18">
    <location>
        <begin position="1"/>
        <end position="461"/>
    </location>
</feature>
<feature type="topological domain" description="Cytoplasmic" evidence="1">
    <location>
        <begin position="1"/>
        <end position="21"/>
    </location>
</feature>
<feature type="transmembrane region" description="Helical" evidence="1">
    <location>
        <begin position="22"/>
        <end position="42"/>
    </location>
</feature>
<feature type="intramembrane region" description="Pore-forming; Name=Pore-forming 1" evidence="1">
    <location>
        <begin position="116"/>
        <end position="136"/>
    </location>
</feature>
<feature type="transmembrane region" description="Helical" evidence="1">
    <location>
        <begin position="144"/>
        <end position="164"/>
    </location>
</feature>
<feature type="topological domain" description="Cytoplasmic" evidence="1">
    <location>
        <begin position="165"/>
        <end position="224"/>
    </location>
</feature>
<feature type="transmembrane region" description="Helical" evidence="1">
    <location>
        <begin position="225"/>
        <end position="245"/>
    </location>
</feature>
<feature type="intramembrane region" description="Pore-forming; Name=Pore-forming 2" evidence="1">
    <location>
        <begin position="253"/>
        <end position="273"/>
    </location>
</feature>
<feature type="transmembrane region" description="Helical" evidence="1">
    <location>
        <begin position="281"/>
        <end position="301"/>
    </location>
</feature>
<feature type="topological domain" description="Cytoplasmic" evidence="1">
    <location>
        <begin position="302"/>
        <end position="461"/>
    </location>
</feature>
<feature type="region of interest" description="Disordered" evidence="2">
    <location>
        <begin position="328"/>
        <end position="347"/>
    </location>
</feature>
<feature type="glycosylation site" description="N-linked (GlcNAc...) asparagine" evidence="4">
    <location>
        <position position="88"/>
    </location>
</feature>
<feature type="mutagenesis site" description="In sa589; defects in locomotion." evidence="3">
    <original>G</original>
    <variation>E</variation>
    <location>
        <position position="140"/>
    </location>
</feature>
<feature type="mutagenesis site" description="In e1913; homozygotes are embryonic lethal, heterozygotes exhibit defects in locomotion." evidence="3">
    <original>G</original>
    <variation>D</variation>
    <location>
        <position position="165"/>
    </location>
</feature>
<feature type="mutagenesis site" description="In cn110; temperature sensitive defects in locomotion." evidence="3">
    <original>M</original>
    <variation>I</variation>
    <location>
        <position position="280"/>
    </location>
</feature>
<protein>
    <recommendedName>
        <fullName>TWiK family of potassium channels protein 18</fullName>
    </recommendedName>
</protein>
<comment type="function">
    <text evidence="3">Outwardly rectifying potassium channel protein; activity is sharply augmented by increase in temperature.</text>
</comment>
<comment type="subcellular location">
    <subcellularLocation>
        <location evidence="5">Membrane</location>
        <topology evidence="5">Multi-pass membrane protein</topology>
    </subcellularLocation>
</comment>
<comment type="tissue specificity">
    <text evidence="3">Expressed in body wall muscle.</text>
</comment>
<comment type="disruption phenotype">
    <text evidence="3">Worms display uncoordinated movement and paralysis.</text>
</comment>
<comment type="similarity">
    <text evidence="1">Belongs to the two pore domain potassium channel (TC 1.A.1.8) family.</text>
</comment>
<evidence type="ECO:0000255" key="1"/>
<evidence type="ECO:0000256" key="2">
    <source>
        <dbReference type="SAM" id="MobiDB-lite"/>
    </source>
</evidence>
<evidence type="ECO:0000269" key="3">
    <source>
    </source>
</evidence>
<evidence type="ECO:0000269" key="4">
    <source>
    </source>
</evidence>
<evidence type="ECO:0000305" key="5"/>
<evidence type="ECO:0000312" key="6">
    <source>
        <dbReference type="EMBL" id="AAC32861.1"/>
    </source>
</evidence>
<keyword id="KW-0325">Glycoprotein</keyword>
<keyword id="KW-0407">Ion channel</keyword>
<keyword id="KW-0406">Ion transport</keyword>
<keyword id="KW-0472">Membrane</keyword>
<keyword id="KW-0630">Potassium</keyword>
<keyword id="KW-0631">Potassium channel</keyword>
<keyword id="KW-0633">Potassium transport</keyword>
<keyword id="KW-1185">Reference proteome</keyword>
<keyword id="KW-0812">Transmembrane</keyword>
<keyword id="KW-1133">Transmembrane helix</keyword>
<keyword id="KW-0813">Transport</keyword>
<organism>
    <name type="scientific">Caenorhabditis elegans</name>
    <dbReference type="NCBI Taxonomy" id="6239"/>
    <lineage>
        <taxon>Eukaryota</taxon>
        <taxon>Metazoa</taxon>
        <taxon>Ecdysozoa</taxon>
        <taxon>Nematoda</taxon>
        <taxon>Chromadorea</taxon>
        <taxon>Rhabditida</taxon>
        <taxon>Rhabditina</taxon>
        <taxon>Rhabditomorpha</taxon>
        <taxon>Rhabditoidea</taxon>
        <taxon>Rhabditidae</taxon>
        <taxon>Peloderinae</taxon>
        <taxon>Caenorhabditis</taxon>
    </lineage>
</organism>
<accession>Q18120</accession>
<accession>Q9TZP8</accession>
<sequence>MAIVAQGVSTILTTFQKTFKGLLPLIILVAYTLLGAWIFWMIEGENEREMLIEQQKERDELIRRTVYKINQLQIKRQRRLMTAEEEYNRTAKVLTTFQETLGIVPADMDKDIHWTFLGSIFYCMTVYTTIGYGNIVPGTGWGRFATILYAFIGIPLTVLSLYCLGSLFAKGCKMLWRFFLKSTRVVSKDLSNKISEAADNIEEGTTAITPSAEKTENNDDDLLSFPISGLLLITVIWVIFCAVLFTFLEEWDFGTSLYFTLISFTTIGFGDILPSDYDFMPIVGVLLLIGLSLVSTVMTLIQQQIEALASGMKDNIDQEYARALNEAREDGEVDEHVDPEEDPENNKKSFDAVISRMNWSKRGLYYLLPDSQKKELAKQSEKKMGRKSIKIQTDNDLLETLIREEILKAELNNEMHKYTAPRSSHQPKLVYSDVREKEVPIEVVRVEHFNHGNEDYLEHDI</sequence>